<keyword id="KW-0025">Alternative splicing</keyword>
<keyword id="KW-0963">Cytoplasm</keyword>
<keyword id="KW-0539">Nucleus</keyword>
<keyword id="KW-0653">Protein transport</keyword>
<keyword id="KW-1185">Reference proteome</keyword>
<keyword id="KW-0677">Repeat</keyword>
<keyword id="KW-0813">Transport</keyword>
<organism>
    <name type="scientific">Mus musculus</name>
    <name type="common">Mouse</name>
    <dbReference type="NCBI Taxonomy" id="10090"/>
    <lineage>
        <taxon>Eukaryota</taxon>
        <taxon>Metazoa</taxon>
        <taxon>Chordata</taxon>
        <taxon>Craniata</taxon>
        <taxon>Vertebrata</taxon>
        <taxon>Euteleostomi</taxon>
        <taxon>Mammalia</taxon>
        <taxon>Eutheria</taxon>
        <taxon>Euarchontoglires</taxon>
        <taxon>Glires</taxon>
        <taxon>Rodentia</taxon>
        <taxon>Myomorpha</taxon>
        <taxon>Muroidea</taxon>
        <taxon>Muridae</taxon>
        <taxon>Murinae</taxon>
        <taxon>Mus</taxon>
        <taxon>Mus</taxon>
    </lineage>
</organism>
<reference key="1">
    <citation type="journal article" date="2003" name="DNA Res.">
        <title>Prediction of the coding sequences of mouse homologues of KIAA gene: III. The complete nucleotide sequences of 500 mouse KIAA-homologous cDNAs identified by screening of terminal sequences of cDNA clones randomly sampled from size-fractionated libraries.</title>
        <authorList>
            <person name="Okazaki N."/>
            <person name="Kikuno R."/>
            <person name="Ohara R."/>
            <person name="Inamoto S."/>
            <person name="Koseki H."/>
            <person name="Hiraoka S."/>
            <person name="Saga Y."/>
            <person name="Nagase T."/>
            <person name="Ohara O."/>
            <person name="Koga H."/>
        </authorList>
    </citation>
    <scope>NUCLEOTIDE SEQUENCE [LARGE SCALE MRNA] (ISOFORM 2)</scope>
    <source>
        <tissue>Embryo</tissue>
    </source>
</reference>
<reference key="2">
    <citation type="submission" date="2003-12" db="EMBL/GenBank/DDBJ databases">
        <authorList>
            <person name="Okazaki N."/>
            <person name="Kikuno R."/>
            <person name="Nagase T."/>
            <person name="Ohara O."/>
            <person name="Koga H."/>
        </authorList>
    </citation>
    <scope>SEQUENCE REVISION</scope>
</reference>
<reference key="3">
    <citation type="journal article" date="2004" name="Genome Res.">
        <title>The status, quality, and expansion of the NIH full-length cDNA project: the Mammalian Gene Collection (MGC).</title>
        <authorList>
            <consortium name="The MGC Project Team"/>
        </authorList>
    </citation>
    <scope>NUCLEOTIDE SEQUENCE [LARGE SCALE MRNA] (ISOFORM 1)</scope>
    <source>
        <strain>FVB/N</strain>
        <tissue>Salivary gland</tissue>
    </source>
</reference>
<reference key="4">
    <citation type="journal article" date="2005" name="Science">
        <title>The transcriptional landscape of the mammalian genome.</title>
        <authorList>
            <person name="Carninci P."/>
            <person name="Kasukawa T."/>
            <person name="Katayama S."/>
            <person name="Gough J."/>
            <person name="Frith M.C."/>
            <person name="Maeda N."/>
            <person name="Oyama R."/>
            <person name="Ravasi T."/>
            <person name="Lenhard B."/>
            <person name="Wells C."/>
            <person name="Kodzius R."/>
            <person name="Shimokawa K."/>
            <person name="Bajic V.B."/>
            <person name="Brenner S.E."/>
            <person name="Batalov S."/>
            <person name="Forrest A.R."/>
            <person name="Zavolan M."/>
            <person name="Davis M.J."/>
            <person name="Wilming L.G."/>
            <person name="Aidinis V."/>
            <person name="Allen J.E."/>
            <person name="Ambesi-Impiombato A."/>
            <person name="Apweiler R."/>
            <person name="Aturaliya R.N."/>
            <person name="Bailey T.L."/>
            <person name="Bansal M."/>
            <person name="Baxter L."/>
            <person name="Beisel K.W."/>
            <person name="Bersano T."/>
            <person name="Bono H."/>
            <person name="Chalk A.M."/>
            <person name="Chiu K.P."/>
            <person name="Choudhary V."/>
            <person name="Christoffels A."/>
            <person name="Clutterbuck D.R."/>
            <person name="Crowe M.L."/>
            <person name="Dalla E."/>
            <person name="Dalrymple B.P."/>
            <person name="de Bono B."/>
            <person name="Della Gatta G."/>
            <person name="di Bernardo D."/>
            <person name="Down T."/>
            <person name="Engstrom P."/>
            <person name="Fagiolini M."/>
            <person name="Faulkner G."/>
            <person name="Fletcher C.F."/>
            <person name="Fukushima T."/>
            <person name="Furuno M."/>
            <person name="Futaki S."/>
            <person name="Gariboldi M."/>
            <person name="Georgii-Hemming P."/>
            <person name="Gingeras T.R."/>
            <person name="Gojobori T."/>
            <person name="Green R.E."/>
            <person name="Gustincich S."/>
            <person name="Harbers M."/>
            <person name="Hayashi Y."/>
            <person name="Hensch T.K."/>
            <person name="Hirokawa N."/>
            <person name="Hill D."/>
            <person name="Huminiecki L."/>
            <person name="Iacono M."/>
            <person name="Ikeo K."/>
            <person name="Iwama A."/>
            <person name="Ishikawa T."/>
            <person name="Jakt M."/>
            <person name="Kanapin A."/>
            <person name="Katoh M."/>
            <person name="Kawasawa Y."/>
            <person name="Kelso J."/>
            <person name="Kitamura H."/>
            <person name="Kitano H."/>
            <person name="Kollias G."/>
            <person name="Krishnan S.P."/>
            <person name="Kruger A."/>
            <person name="Kummerfeld S.K."/>
            <person name="Kurochkin I.V."/>
            <person name="Lareau L.F."/>
            <person name="Lazarevic D."/>
            <person name="Lipovich L."/>
            <person name="Liu J."/>
            <person name="Liuni S."/>
            <person name="McWilliam S."/>
            <person name="Madan Babu M."/>
            <person name="Madera M."/>
            <person name="Marchionni L."/>
            <person name="Matsuda H."/>
            <person name="Matsuzawa S."/>
            <person name="Miki H."/>
            <person name="Mignone F."/>
            <person name="Miyake S."/>
            <person name="Morris K."/>
            <person name="Mottagui-Tabar S."/>
            <person name="Mulder N."/>
            <person name="Nakano N."/>
            <person name="Nakauchi H."/>
            <person name="Ng P."/>
            <person name="Nilsson R."/>
            <person name="Nishiguchi S."/>
            <person name="Nishikawa S."/>
            <person name="Nori F."/>
            <person name="Ohara O."/>
            <person name="Okazaki Y."/>
            <person name="Orlando V."/>
            <person name="Pang K.C."/>
            <person name="Pavan W.J."/>
            <person name="Pavesi G."/>
            <person name="Pesole G."/>
            <person name="Petrovsky N."/>
            <person name="Piazza S."/>
            <person name="Reed J."/>
            <person name="Reid J.F."/>
            <person name="Ring B.Z."/>
            <person name="Ringwald M."/>
            <person name="Rost B."/>
            <person name="Ruan Y."/>
            <person name="Salzberg S.L."/>
            <person name="Sandelin A."/>
            <person name="Schneider C."/>
            <person name="Schoenbach C."/>
            <person name="Sekiguchi K."/>
            <person name="Semple C.A."/>
            <person name="Seno S."/>
            <person name="Sessa L."/>
            <person name="Sheng Y."/>
            <person name="Shibata Y."/>
            <person name="Shimada H."/>
            <person name="Shimada K."/>
            <person name="Silva D."/>
            <person name="Sinclair B."/>
            <person name="Sperling S."/>
            <person name="Stupka E."/>
            <person name="Sugiura K."/>
            <person name="Sultana R."/>
            <person name="Takenaka Y."/>
            <person name="Taki K."/>
            <person name="Tammoja K."/>
            <person name="Tan S.L."/>
            <person name="Tang S."/>
            <person name="Taylor M.S."/>
            <person name="Tegner J."/>
            <person name="Teichmann S.A."/>
            <person name="Ueda H.R."/>
            <person name="van Nimwegen E."/>
            <person name="Verardo R."/>
            <person name="Wei C.L."/>
            <person name="Yagi K."/>
            <person name="Yamanishi H."/>
            <person name="Zabarovsky E."/>
            <person name="Zhu S."/>
            <person name="Zimmer A."/>
            <person name="Hide W."/>
            <person name="Bult C."/>
            <person name="Grimmond S.M."/>
            <person name="Teasdale R.D."/>
            <person name="Liu E.T."/>
            <person name="Brusic V."/>
            <person name="Quackenbush J."/>
            <person name="Wahlestedt C."/>
            <person name="Mattick J.S."/>
            <person name="Hume D.A."/>
            <person name="Kai C."/>
            <person name="Sasaki D."/>
            <person name="Tomaru Y."/>
            <person name="Fukuda S."/>
            <person name="Kanamori-Katayama M."/>
            <person name="Suzuki M."/>
            <person name="Aoki J."/>
            <person name="Arakawa T."/>
            <person name="Iida J."/>
            <person name="Imamura K."/>
            <person name="Itoh M."/>
            <person name="Kato T."/>
            <person name="Kawaji H."/>
            <person name="Kawagashira N."/>
            <person name="Kawashima T."/>
            <person name="Kojima M."/>
            <person name="Kondo S."/>
            <person name="Konno H."/>
            <person name="Nakano K."/>
            <person name="Ninomiya N."/>
            <person name="Nishio T."/>
            <person name="Okada M."/>
            <person name="Plessy C."/>
            <person name="Shibata K."/>
            <person name="Shiraki T."/>
            <person name="Suzuki S."/>
            <person name="Tagami M."/>
            <person name="Waki K."/>
            <person name="Watahiki A."/>
            <person name="Okamura-Oho Y."/>
            <person name="Suzuki H."/>
            <person name="Kawai J."/>
            <person name="Hayashizaki Y."/>
        </authorList>
    </citation>
    <scope>NUCLEOTIDE SEQUENCE [LARGE SCALE MRNA] (ISOFORM 1)</scope>
    <source>
        <strain>C57BL/6J</strain>
        <tissue>Heart</tissue>
    </source>
</reference>
<reference key="5">
    <citation type="journal article" date="2010" name="Cell">
        <title>A tissue-specific atlas of mouse protein phosphorylation and expression.</title>
        <authorList>
            <person name="Huttlin E.L."/>
            <person name="Jedrychowski M.P."/>
            <person name="Elias J.E."/>
            <person name="Goswami T."/>
            <person name="Rad R."/>
            <person name="Beausoleil S.A."/>
            <person name="Villen J."/>
            <person name="Haas W."/>
            <person name="Sowa M.E."/>
            <person name="Gygi S.P."/>
        </authorList>
    </citation>
    <scope>IDENTIFICATION BY MASS SPECTROMETRY [LARGE SCALE ANALYSIS]</scope>
    <source>
        <tissue>Brown adipose tissue</tissue>
        <tissue>Lung</tissue>
        <tissue>Spleen</tissue>
        <tissue>Testis</tissue>
    </source>
</reference>
<comment type="function">
    <text evidence="1">Functions in nuclear protein import as nuclear transport receptor. Serves as receptor for nuclear localization signals (NLS) in cargo substrates. Is thought to mediate docking of the importin/substrate complex to the nuclear pore complex (NPC) through binding to nucleoporin and the complex is subsequently translocated through the pore by an energy requiring, Ran-dependent mechanism. At the nucleoplasmic side of the NPC, Ran binds to the importin, the importin/substrate complex dissociates and importin is re-exported from the nucleus to the cytoplasm where GTP hydrolysis releases Ran. The directionality of nuclear import is thought to be conferred by an asymmetric distribution of the GTP- and GDP-bound forms of Ran between the cytoplasm and nucleus (By similarity). Mediates the nuclear import of UBC9, the RBM8A/MAGOH complex, PAX6 and probably other members of the paired homeobox family. Also mediates nuclear export of eIF-1A, and the cytoplasmic release of eIF-1A is triggered by the loading of import substrates onto IPO13 (By similarity).</text>
</comment>
<comment type="subunit">
    <text evidence="1">Interacts with UBC9, RAN, RBM8A, eIF-1A and PAX6.</text>
</comment>
<comment type="subcellular location">
    <subcellularLocation>
        <location evidence="1">Cytoplasm</location>
    </subcellularLocation>
    <subcellularLocation>
        <location evidence="1">Nucleus</location>
    </subcellularLocation>
</comment>
<comment type="alternative products">
    <event type="alternative splicing"/>
    <isoform>
        <id>Q8K0C1-1</id>
        <name>1</name>
        <sequence type="displayed"/>
    </isoform>
    <isoform>
        <id>Q8K0C1-2</id>
        <name>2</name>
        <sequence type="described" ref="VSP_010936 VSP_010937"/>
    </isoform>
</comment>
<comment type="similarity">
    <text evidence="4">Belongs to the importin beta family.</text>
</comment>
<dbReference type="EMBL" id="AK129200">
    <property type="protein sequence ID" value="BAC98010.2"/>
    <property type="molecule type" value="Transcribed_RNA"/>
</dbReference>
<dbReference type="EMBL" id="BC031823">
    <property type="protein sequence ID" value="AAH31823.1"/>
    <property type="molecule type" value="mRNA"/>
</dbReference>
<dbReference type="EMBL" id="AK052257">
    <property type="protein sequence ID" value="BAC34899.1"/>
    <property type="molecule type" value="mRNA"/>
</dbReference>
<dbReference type="CCDS" id="CCDS18542.1">
    <molecule id="Q8K0C1-1"/>
</dbReference>
<dbReference type="RefSeq" id="NP_666264.1">
    <molecule id="Q8K0C1-1"/>
    <property type="nucleotide sequence ID" value="NM_146152.3"/>
</dbReference>
<dbReference type="SMR" id="Q8K0C1"/>
<dbReference type="BioGRID" id="230998">
    <property type="interactions" value="2"/>
</dbReference>
<dbReference type="FunCoup" id="Q8K0C1">
    <property type="interactions" value="3503"/>
</dbReference>
<dbReference type="STRING" id="10090.ENSMUSP00000035989"/>
<dbReference type="iPTMnet" id="Q8K0C1"/>
<dbReference type="PhosphoSitePlus" id="Q8K0C1"/>
<dbReference type="SwissPalm" id="Q8K0C1"/>
<dbReference type="PaxDb" id="10090-ENSMUSP00000035989"/>
<dbReference type="PeptideAtlas" id="Q8K0C1"/>
<dbReference type="ProteomicsDB" id="269080">
    <molecule id="Q8K0C1-1"/>
</dbReference>
<dbReference type="ProteomicsDB" id="269081">
    <molecule id="Q8K0C1-2"/>
</dbReference>
<dbReference type="Pumba" id="Q8K0C1"/>
<dbReference type="Antibodypedia" id="32405">
    <property type="antibodies" value="110 antibodies from 21 providers"/>
</dbReference>
<dbReference type="DNASU" id="230673"/>
<dbReference type="Ensembl" id="ENSMUST00000036156.6">
    <molecule id="Q8K0C1-1"/>
    <property type="protein sequence ID" value="ENSMUSP00000035989.6"/>
    <property type="gene ID" value="ENSMUSG00000033365.15"/>
</dbReference>
<dbReference type="GeneID" id="230673"/>
<dbReference type="KEGG" id="mmu:230673"/>
<dbReference type="UCSC" id="uc008ujg.1">
    <molecule id="Q8K0C1-1"/>
    <property type="organism name" value="mouse"/>
</dbReference>
<dbReference type="AGR" id="MGI:2385205"/>
<dbReference type="CTD" id="9670"/>
<dbReference type="MGI" id="MGI:2385205">
    <property type="gene designation" value="Ipo13"/>
</dbReference>
<dbReference type="VEuPathDB" id="HostDB:ENSMUSG00000033365"/>
<dbReference type="eggNOG" id="KOG2022">
    <property type="taxonomic scope" value="Eukaryota"/>
</dbReference>
<dbReference type="GeneTree" id="ENSGT00530000063347"/>
<dbReference type="HOGENOM" id="CLU_005996_3_0_1"/>
<dbReference type="InParanoid" id="Q8K0C1"/>
<dbReference type="OMA" id="KYPAEMA"/>
<dbReference type="OrthoDB" id="2016913at2759"/>
<dbReference type="PhylomeDB" id="Q8K0C1"/>
<dbReference type="TreeFam" id="TF314539"/>
<dbReference type="BioGRID-ORCS" id="230673">
    <property type="hits" value="28 hits in 77 CRISPR screens"/>
</dbReference>
<dbReference type="PRO" id="PR:Q8K0C1"/>
<dbReference type="Proteomes" id="UP000000589">
    <property type="component" value="Chromosome 4"/>
</dbReference>
<dbReference type="RNAct" id="Q8K0C1">
    <property type="molecule type" value="protein"/>
</dbReference>
<dbReference type="Bgee" id="ENSMUSG00000033365">
    <property type="expression patterns" value="Expressed in hindlimb stylopod muscle and 231 other cell types or tissues"/>
</dbReference>
<dbReference type="GO" id="GO:0005737">
    <property type="term" value="C:cytoplasm"/>
    <property type="evidence" value="ECO:0007669"/>
    <property type="project" value="UniProtKB-SubCell"/>
</dbReference>
<dbReference type="GO" id="GO:0005634">
    <property type="term" value="C:nucleus"/>
    <property type="evidence" value="ECO:0007669"/>
    <property type="project" value="UniProtKB-SubCell"/>
</dbReference>
<dbReference type="GO" id="GO:0031267">
    <property type="term" value="F:small GTPase binding"/>
    <property type="evidence" value="ECO:0007669"/>
    <property type="project" value="InterPro"/>
</dbReference>
<dbReference type="GO" id="GO:0006606">
    <property type="term" value="P:protein import into nucleus"/>
    <property type="evidence" value="ECO:0000266"/>
    <property type="project" value="MGI"/>
</dbReference>
<dbReference type="FunFam" id="1.25.10.10:FF:000107">
    <property type="entry name" value="Importin-13"/>
    <property type="match status" value="1"/>
</dbReference>
<dbReference type="Gene3D" id="1.25.10.10">
    <property type="entry name" value="Leucine-rich Repeat Variant"/>
    <property type="match status" value="1"/>
</dbReference>
<dbReference type="InterPro" id="IPR011989">
    <property type="entry name" value="ARM-like"/>
</dbReference>
<dbReference type="InterPro" id="IPR016024">
    <property type="entry name" value="ARM-type_fold"/>
</dbReference>
<dbReference type="InterPro" id="IPR013598">
    <property type="entry name" value="Exportin-1/Importin-b-like"/>
</dbReference>
<dbReference type="InterPro" id="IPR001494">
    <property type="entry name" value="Importin-beta_N"/>
</dbReference>
<dbReference type="InterPro" id="IPR051345">
    <property type="entry name" value="Importin_beta-like_NTR"/>
</dbReference>
<dbReference type="InterPro" id="IPR040709">
    <property type="entry name" value="Importin_rep_1"/>
</dbReference>
<dbReference type="InterPro" id="IPR040944">
    <property type="entry name" value="Importin_rep_2"/>
</dbReference>
<dbReference type="InterPro" id="IPR040520">
    <property type="entry name" value="Importin_rep_3"/>
</dbReference>
<dbReference type="PANTHER" id="PTHR12363:SF33">
    <property type="entry name" value="IMPORTIN-13"/>
    <property type="match status" value="1"/>
</dbReference>
<dbReference type="PANTHER" id="PTHR12363">
    <property type="entry name" value="TRANSPORTIN 3 AND IMPORTIN 13"/>
    <property type="match status" value="1"/>
</dbReference>
<dbReference type="Pfam" id="PF03810">
    <property type="entry name" value="IBN_N"/>
    <property type="match status" value="1"/>
</dbReference>
<dbReference type="Pfam" id="PF18773">
    <property type="entry name" value="Importin_rep"/>
    <property type="match status" value="1"/>
</dbReference>
<dbReference type="Pfam" id="PF18786">
    <property type="entry name" value="Importin_rep_2"/>
    <property type="match status" value="2"/>
</dbReference>
<dbReference type="Pfam" id="PF18806">
    <property type="entry name" value="Importin_rep_3"/>
    <property type="match status" value="1"/>
</dbReference>
<dbReference type="Pfam" id="PF24138">
    <property type="entry name" value="TPR_TNPO3_IPO13_2nd"/>
    <property type="match status" value="1"/>
</dbReference>
<dbReference type="Pfam" id="PF24140">
    <property type="entry name" value="TPR_TNPO3_IPO13_3rd"/>
    <property type="match status" value="1"/>
</dbReference>
<dbReference type="Pfam" id="PF24139">
    <property type="entry name" value="TPR_TNPO3_IPO13_4th"/>
    <property type="match status" value="1"/>
</dbReference>
<dbReference type="Pfam" id="PF08389">
    <property type="entry name" value="Xpo1"/>
    <property type="match status" value="1"/>
</dbReference>
<dbReference type="SMART" id="SM00913">
    <property type="entry name" value="IBN_N"/>
    <property type="match status" value="1"/>
</dbReference>
<dbReference type="SUPFAM" id="SSF48371">
    <property type="entry name" value="ARM repeat"/>
    <property type="match status" value="1"/>
</dbReference>
<dbReference type="PROSITE" id="PS50166">
    <property type="entry name" value="IMPORTIN_B_NT"/>
    <property type="match status" value="1"/>
</dbReference>
<name>IPO13_MOUSE</name>
<accession>Q8K0C1</accession>
<accession>Q6ZQ60</accession>
<gene>
    <name type="primary">Ipo13</name>
    <name type="synonym">Kiaa0724</name>
</gene>
<evidence type="ECO:0000250" key="1"/>
<evidence type="ECO:0000255" key="2">
    <source>
        <dbReference type="PROSITE-ProRule" id="PRU00115"/>
    </source>
</evidence>
<evidence type="ECO:0000303" key="3">
    <source>
    </source>
</evidence>
<evidence type="ECO:0000305" key="4"/>
<proteinExistence type="evidence at protein level"/>
<protein>
    <recommendedName>
        <fullName>Importin-13</fullName>
        <shortName>Imp13</shortName>
    </recommendedName>
</protein>
<sequence>MERREEQLGAAGAGAAPALDFTVENVEKALHQLYYDPNIDNKNLAQKWLMQAQVSPQAWHFSWQLLQPDKVPEIQYFGASALHIKISRYWSDIPTDQYESLKAQLFTQITRFASGSKIVLTRLCVALASLALSMMPDAWPCAVADMVRLFQAEDSPVDSQGRCLALLELLTVLPEEFQTSRLPQYRKGLVRTSLAVECGTVFPLLEQLLQQPSSPSCVRQKVLKCFSSWVQLEVPLQDCEALIQAAFAALQDSELFDSSVEAIVNAISQPDAQRYVNTLLKLIPLVLGLQEQLRQAVQNGDMETSHGICRIAVALGENHSRALLDQVEHWQSFLALVNMIMFCTGIPGHYPVNETTSSLTLTFWYTLQDDILSFEAEKQAVYQQVYRPVYFQLVDVLLHKAQFPSDEEYGFWSSDEKEQFRIYRVDISDTLMYVYEMLGAELLSNLYDKLGRLLTSSEEPYSWQHTEALLYGFQSIAETIDVNYSDVVPGLIGLIPRISISNVQLADTVMFTIGALSEWLADHPVMINSVLPLVLHALGNPELSVSSVSTLKKICRECKYDLPPYAANIVAVSQDVLMKQIHKTSQCMWLMQALGFLLSALQVEEILKNLHSLISPYIQQLEKLAEEIPNPSNKLAIVHILGLLSNLFTTLDVSHHEDDHEGPELRKLPVPQGPNPVVVVLQQVFQLIQKVLSKWLNDAQVVEAVCAIFEKSVKTLLDDFAPMVPQLCEMLGRMYSTVPQASALDLTRQLVHIFAHEPAHFPPIEALFLLVTSVTLSLFQQGPRDHPDIVDSFMQLLAQALKRKPDLFLCERLDVKAVFQCAVLALKFPEAPTVKASCGFFTELLPRCGEIESVGKVVQEDGRMLLIAVLEAIGGQASRSLMDCFADILFALNKHCFSLLSMWIKEALQPPGFPSARLSPEQKDTFSQQILRERVNKRRVKEMVKEFTLLCRGLHGTDYTADY</sequence>
<feature type="chain" id="PRO_0000120759" description="Importin-13">
    <location>
        <begin position="1"/>
        <end position="963"/>
    </location>
</feature>
<feature type="repeat" description="HEAT 1">
    <location>
        <begin position="24"/>
        <end position="54"/>
    </location>
</feature>
<feature type="domain" description="Importin N-terminal" evidence="2">
    <location>
        <begin position="45"/>
        <end position="111"/>
    </location>
</feature>
<feature type="repeat" description="HEAT 2">
    <location>
        <begin position="56"/>
        <end position="88"/>
    </location>
</feature>
<feature type="repeat" description="HEAT 3">
    <location>
        <begin position="95"/>
        <end position="135"/>
    </location>
</feature>
<feature type="repeat" description="HEAT 4">
    <location>
        <begin position="142"/>
        <end position="179"/>
    </location>
</feature>
<feature type="repeat" description="HEAT 5">
    <location>
        <begin position="194"/>
        <end position="231"/>
    </location>
</feature>
<feature type="repeat" description="HEAT 6">
    <location>
        <begin position="236"/>
        <end position="268"/>
    </location>
</feature>
<feature type="repeat" description="HEAT 7">
    <location>
        <begin position="276"/>
        <end position="325"/>
    </location>
</feature>
<feature type="repeat" description="HEAT 8">
    <location>
        <begin position="330"/>
        <end position="372"/>
    </location>
</feature>
<feature type="repeat" description="HEAT 9">
    <location>
        <begin position="375"/>
        <end position="438"/>
    </location>
</feature>
<feature type="repeat" description="HEAT 10">
    <location>
        <begin position="440"/>
        <end position="476"/>
    </location>
</feature>
<feature type="repeat" description="HEAT 11">
    <location>
        <begin position="487"/>
        <end position="522"/>
    </location>
</feature>
<feature type="repeat" description="HEAT 12">
    <location>
        <begin position="524"/>
        <end position="558"/>
    </location>
</feature>
<feature type="repeat" description="HEAT 13">
    <location>
        <begin position="562"/>
        <end position="600"/>
    </location>
</feature>
<feature type="repeat" description="HEAT 14">
    <location>
        <begin position="603"/>
        <end position="648"/>
    </location>
</feature>
<feature type="repeat" description="HEAT 15">
    <location>
        <begin position="676"/>
        <end position="716"/>
    </location>
</feature>
<feature type="repeat" description="HEAT 16">
    <location>
        <begin position="720"/>
        <end position="754"/>
    </location>
</feature>
<feature type="repeat" description="HEAT 17">
    <location>
        <begin position="761"/>
        <end position="803"/>
    </location>
</feature>
<feature type="repeat" description="HEAT 18">
    <location>
        <begin position="815"/>
        <end position="845"/>
    </location>
</feature>
<feature type="repeat" description="HEAT 19">
    <location>
        <begin position="860"/>
        <end position="893"/>
    </location>
</feature>
<feature type="repeat" description="HEAT 20">
    <location>
        <begin position="897"/>
        <end position="931"/>
    </location>
</feature>
<feature type="splice variant" id="VSP_010936" description="In isoform 2." evidence="3">
    <location>
        <begin position="369"/>
        <end position="375"/>
    </location>
</feature>
<feature type="splice variant" id="VSP_010937" description="In isoform 2." evidence="3">
    <original>AIGGQASRSLMDCFA</original>
    <variation>VSWSKWLGVGRPSLLRRLALCCG</variation>
    <location>
        <begin position="872"/>
        <end position="886"/>
    </location>
</feature>